<feature type="chain" id="PRO_1000147938" description="Probable aspartoacylase">
    <location>
        <begin position="1"/>
        <end position="305"/>
    </location>
</feature>
<feature type="binding site" evidence="1">
    <location>
        <position position="13"/>
    </location>
    <ligand>
        <name>Zn(2+)</name>
        <dbReference type="ChEBI" id="CHEBI:29105"/>
    </ligand>
</feature>
<feature type="binding site" evidence="1">
    <location>
        <position position="16"/>
    </location>
    <ligand>
        <name>Zn(2+)</name>
        <dbReference type="ChEBI" id="CHEBI:29105"/>
    </ligand>
</feature>
<feature type="binding site" evidence="1">
    <location>
        <position position="55"/>
    </location>
    <ligand>
        <name>substrate</name>
    </ligand>
</feature>
<feature type="binding site" evidence="1">
    <location>
        <begin position="62"/>
        <end position="63"/>
    </location>
    <ligand>
        <name>substrate</name>
    </ligand>
</feature>
<feature type="binding site" evidence="1">
    <location>
        <position position="105"/>
    </location>
    <ligand>
        <name>Zn(2+)</name>
        <dbReference type="ChEBI" id="CHEBI:29105"/>
    </ligand>
</feature>
<feature type="binding site" evidence="1">
    <location>
        <position position="163"/>
    </location>
    <ligand>
        <name>substrate</name>
    </ligand>
</feature>
<feature type="binding site" evidence="1">
    <location>
        <position position="273"/>
    </location>
    <ligand>
        <name>substrate</name>
    </ligand>
</feature>
<dbReference type="EC" id="3.5.1.15" evidence="1"/>
<dbReference type="EMBL" id="CP000553">
    <property type="protein sequence ID" value="ABM74865.1"/>
    <property type="molecule type" value="Genomic_DNA"/>
</dbReference>
<dbReference type="RefSeq" id="WP_011823077.1">
    <property type="nucleotide sequence ID" value="NC_008819.1"/>
</dbReference>
<dbReference type="SMR" id="A2C055"/>
<dbReference type="KEGG" id="pme:NATL1_03011"/>
<dbReference type="eggNOG" id="COG2988">
    <property type="taxonomic scope" value="Bacteria"/>
</dbReference>
<dbReference type="HOGENOM" id="CLU_083292_0_0_3"/>
<dbReference type="Proteomes" id="UP000002592">
    <property type="component" value="Chromosome"/>
</dbReference>
<dbReference type="GO" id="GO:0005829">
    <property type="term" value="C:cytosol"/>
    <property type="evidence" value="ECO:0007669"/>
    <property type="project" value="TreeGrafter"/>
</dbReference>
<dbReference type="GO" id="GO:0019807">
    <property type="term" value="F:aspartoacylase activity"/>
    <property type="evidence" value="ECO:0007669"/>
    <property type="project" value="UniProtKB-UniRule"/>
</dbReference>
<dbReference type="GO" id="GO:0016788">
    <property type="term" value="F:hydrolase activity, acting on ester bonds"/>
    <property type="evidence" value="ECO:0007669"/>
    <property type="project" value="InterPro"/>
</dbReference>
<dbReference type="GO" id="GO:0008270">
    <property type="term" value="F:zinc ion binding"/>
    <property type="evidence" value="ECO:0007669"/>
    <property type="project" value="UniProtKB-UniRule"/>
</dbReference>
<dbReference type="Gene3D" id="2.20.25.160">
    <property type="match status" value="1"/>
</dbReference>
<dbReference type="Gene3D" id="3.40.630.10">
    <property type="entry name" value="Zn peptidases"/>
    <property type="match status" value="1"/>
</dbReference>
<dbReference type="HAMAP" id="MF_00704">
    <property type="entry name" value="Aspartoacylase"/>
    <property type="match status" value="1"/>
</dbReference>
<dbReference type="InterPro" id="IPR050178">
    <property type="entry name" value="AspA/AstE_fam"/>
</dbReference>
<dbReference type="InterPro" id="IPR016708">
    <property type="entry name" value="Aspartoacylase"/>
</dbReference>
<dbReference type="InterPro" id="IPR055438">
    <property type="entry name" value="AstE_AspA_cat"/>
</dbReference>
<dbReference type="InterPro" id="IPR007036">
    <property type="entry name" value="Aste_AspA_hybrid_dom"/>
</dbReference>
<dbReference type="NCBIfam" id="NF002601">
    <property type="entry name" value="PRK02259.1"/>
    <property type="match status" value="1"/>
</dbReference>
<dbReference type="PANTHER" id="PTHR15162">
    <property type="entry name" value="ASPARTOACYLASE"/>
    <property type="match status" value="1"/>
</dbReference>
<dbReference type="PANTHER" id="PTHR15162:SF7">
    <property type="entry name" value="SUCCINYLGLUTAMATE DESUCCINYLASE"/>
    <property type="match status" value="1"/>
</dbReference>
<dbReference type="Pfam" id="PF24827">
    <property type="entry name" value="AstE_AspA_cat"/>
    <property type="match status" value="1"/>
</dbReference>
<dbReference type="Pfam" id="PF04952">
    <property type="entry name" value="AstE_AspA_hybrid"/>
    <property type="match status" value="1"/>
</dbReference>
<dbReference type="PIRSF" id="PIRSF018001">
    <property type="entry name" value="Aspartoacylase"/>
    <property type="match status" value="1"/>
</dbReference>
<dbReference type="SUPFAM" id="SSF53187">
    <property type="entry name" value="Zn-dependent exopeptidases"/>
    <property type="match status" value="1"/>
</dbReference>
<comment type="catalytic activity">
    <reaction evidence="1">
        <text>an N-acyl-L-aspartate + H2O = a carboxylate + L-aspartate</text>
        <dbReference type="Rhea" id="RHEA:10872"/>
        <dbReference type="ChEBI" id="CHEBI:15377"/>
        <dbReference type="ChEBI" id="CHEBI:29067"/>
        <dbReference type="ChEBI" id="CHEBI:29991"/>
        <dbReference type="ChEBI" id="CHEBI:58497"/>
        <dbReference type="EC" id="3.5.1.15"/>
    </reaction>
</comment>
<comment type="cofactor">
    <cofactor evidence="1">
        <name>Zn(2+)</name>
        <dbReference type="ChEBI" id="CHEBI:29105"/>
    </cofactor>
    <text evidence="1">Binds 1 zinc ion per subunit.</text>
</comment>
<comment type="similarity">
    <text evidence="1">Belongs to the AspA/AstE family. Aspartoacylase subfamily.</text>
</comment>
<sequence>MKQLQVLLVAGTHGNEINGIWLFDEWKKSSFLINTHGIKTFQVIGNPEAKKAGKRYIHHDLNRSFKEGSFIKINPLNCERTRASELVNLYGEAGENPCQIALDFHTTTASMGSCIVVYGRRDADLALASLIQNQLGLPVYLHESDQKQTGFLVESWPCGLVVEIGPIGQGLLNSRIISQTKLILETLMEQIHEVKNLNLFFPNKLIIHRHIKSIDFPRDEEGNIDGYVHSLRQSKDWQELKKNDELFCKLNGEIIRFEEDEPYIPVFINEAAYVEKNIAMSFTKRELWNFKKEWKQALIDLIHQK</sequence>
<keyword id="KW-0378">Hydrolase</keyword>
<keyword id="KW-0479">Metal-binding</keyword>
<keyword id="KW-0862">Zinc</keyword>
<accession>A2C055</accession>
<organism>
    <name type="scientific">Prochlorococcus marinus (strain NATL1A)</name>
    <dbReference type="NCBI Taxonomy" id="167555"/>
    <lineage>
        <taxon>Bacteria</taxon>
        <taxon>Bacillati</taxon>
        <taxon>Cyanobacteriota</taxon>
        <taxon>Cyanophyceae</taxon>
        <taxon>Synechococcales</taxon>
        <taxon>Prochlorococcaceae</taxon>
        <taxon>Prochlorococcus</taxon>
    </lineage>
</organism>
<name>ASPA_PROM1</name>
<evidence type="ECO:0000255" key="1">
    <source>
        <dbReference type="HAMAP-Rule" id="MF_00704"/>
    </source>
</evidence>
<protein>
    <recommendedName>
        <fullName evidence="1">Probable aspartoacylase</fullName>
        <ecNumber evidence="1">3.5.1.15</ecNumber>
    </recommendedName>
</protein>
<reference key="1">
    <citation type="journal article" date="2007" name="PLoS Genet.">
        <title>Patterns and implications of gene gain and loss in the evolution of Prochlorococcus.</title>
        <authorList>
            <person name="Kettler G.C."/>
            <person name="Martiny A.C."/>
            <person name="Huang K."/>
            <person name="Zucker J."/>
            <person name="Coleman M.L."/>
            <person name="Rodrigue S."/>
            <person name="Chen F."/>
            <person name="Lapidus A."/>
            <person name="Ferriera S."/>
            <person name="Johnson J."/>
            <person name="Steglich C."/>
            <person name="Church G.M."/>
            <person name="Richardson P."/>
            <person name="Chisholm S.W."/>
        </authorList>
    </citation>
    <scope>NUCLEOTIDE SEQUENCE [LARGE SCALE GENOMIC DNA]</scope>
    <source>
        <strain>NATL1A</strain>
    </source>
</reference>
<proteinExistence type="inferred from homology"/>
<gene>
    <name type="ordered locus">NATL1_03011</name>
</gene>